<comment type="catalytic activity">
    <reaction>
        <text>1-(5-phospho-beta-D-ribosyl)-ATP + H2O = 1-(5-phospho-beta-D-ribosyl)-5'-AMP + diphosphate + H(+)</text>
        <dbReference type="Rhea" id="RHEA:22828"/>
        <dbReference type="ChEBI" id="CHEBI:15377"/>
        <dbReference type="ChEBI" id="CHEBI:15378"/>
        <dbReference type="ChEBI" id="CHEBI:33019"/>
        <dbReference type="ChEBI" id="CHEBI:59457"/>
        <dbReference type="ChEBI" id="CHEBI:73183"/>
        <dbReference type="EC" id="3.6.1.31"/>
    </reaction>
</comment>
<comment type="catalytic activity">
    <reaction>
        <text>1-(5-phospho-beta-D-ribosyl)-5'-AMP + H2O = 1-(5-phospho-beta-D-ribosyl)-5-[(5-phospho-beta-D-ribosylamino)methylideneamino]imidazole-4-carboxamide</text>
        <dbReference type="Rhea" id="RHEA:20049"/>
        <dbReference type="ChEBI" id="CHEBI:15377"/>
        <dbReference type="ChEBI" id="CHEBI:58435"/>
        <dbReference type="ChEBI" id="CHEBI:59457"/>
        <dbReference type="EC" id="3.5.4.19"/>
    </reaction>
</comment>
<comment type="pathway">
    <text>Amino-acid biosynthesis; L-histidine biosynthesis; L-histidine from 5-phospho-alpha-D-ribose 1-diphosphate: step 2/9.</text>
</comment>
<comment type="pathway">
    <text>Amino-acid biosynthesis; L-histidine biosynthesis; L-histidine from 5-phospho-alpha-D-ribose 1-diphosphate: step 3/9.</text>
</comment>
<comment type="subcellular location">
    <subcellularLocation>
        <location evidence="1">Cytoplasm</location>
    </subcellularLocation>
</comment>
<comment type="similarity">
    <text evidence="2">In the N-terminal section; belongs to the PRA-CH family.</text>
</comment>
<comment type="similarity">
    <text evidence="2">In the C-terminal section; belongs to the PRA-PH family.</text>
</comment>
<name>HIS2_SALTI</name>
<feature type="chain" id="PRO_0000136426" description="Histidine biosynthesis bifunctional protein HisIE">
    <location>
        <begin position="1"/>
        <end position="203"/>
    </location>
</feature>
<feature type="region of interest" description="Phosphoribosyl-AMP cyclohydrolase">
    <location>
        <begin position="1"/>
        <end position="114"/>
    </location>
</feature>
<feature type="region of interest" description="Phosphoribosyl-ATP pyrophosphohydrolase">
    <location>
        <begin position="115"/>
        <end position="203"/>
    </location>
</feature>
<accession>Q8Z5J6</accession>
<reference key="1">
    <citation type="journal article" date="2001" name="Nature">
        <title>Complete genome sequence of a multiple drug resistant Salmonella enterica serovar Typhi CT18.</title>
        <authorList>
            <person name="Parkhill J."/>
            <person name="Dougan G."/>
            <person name="James K.D."/>
            <person name="Thomson N.R."/>
            <person name="Pickard D."/>
            <person name="Wain J."/>
            <person name="Churcher C.M."/>
            <person name="Mungall K.L."/>
            <person name="Bentley S.D."/>
            <person name="Holden M.T.G."/>
            <person name="Sebaihia M."/>
            <person name="Baker S."/>
            <person name="Basham D."/>
            <person name="Brooks K."/>
            <person name="Chillingworth T."/>
            <person name="Connerton P."/>
            <person name="Cronin A."/>
            <person name="Davis P."/>
            <person name="Davies R.M."/>
            <person name="Dowd L."/>
            <person name="White N."/>
            <person name="Farrar J."/>
            <person name="Feltwell T."/>
            <person name="Hamlin N."/>
            <person name="Haque A."/>
            <person name="Hien T.T."/>
            <person name="Holroyd S."/>
            <person name="Jagels K."/>
            <person name="Krogh A."/>
            <person name="Larsen T.S."/>
            <person name="Leather S."/>
            <person name="Moule S."/>
            <person name="O'Gaora P."/>
            <person name="Parry C."/>
            <person name="Quail M.A."/>
            <person name="Rutherford K.M."/>
            <person name="Simmonds M."/>
            <person name="Skelton J."/>
            <person name="Stevens K."/>
            <person name="Whitehead S."/>
            <person name="Barrell B.G."/>
        </authorList>
    </citation>
    <scope>NUCLEOTIDE SEQUENCE [LARGE SCALE GENOMIC DNA]</scope>
    <source>
        <strain>CT18</strain>
    </source>
</reference>
<reference key="2">
    <citation type="journal article" date="2003" name="J. Bacteriol.">
        <title>Comparative genomics of Salmonella enterica serovar Typhi strains Ty2 and CT18.</title>
        <authorList>
            <person name="Deng W."/>
            <person name="Liou S.-R."/>
            <person name="Plunkett G. III"/>
            <person name="Mayhew G.F."/>
            <person name="Rose D.J."/>
            <person name="Burland V."/>
            <person name="Kodoyianni V."/>
            <person name="Schwartz D.C."/>
            <person name="Blattner F.R."/>
        </authorList>
    </citation>
    <scope>NUCLEOTIDE SEQUENCE [LARGE SCALE GENOMIC DNA]</scope>
    <source>
        <strain>ATCC 700931 / Ty2</strain>
    </source>
</reference>
<dbReference type="EC" id="3.5.4.19"/>
<dbReference type="EC" id="3.6.1.31"/>
<dbReference type="EMBL" id="AL513382">
    <property type="protein sequence ID" value="CAD02440.1"/>
    <property type="molecule type" value="Genomic_DNA"/>
</dbReference>
<dbReference type="EMBL" id="AE014613">
    <property type="protein sequence ID" value="AAO68486.1"/>
    <property type="molecule type" value="Genomic_DNA"/>
</dbReference>
<dbReference type="RefSeq" id="NP_456626.1">
    <property type="nucleotide sequence ID" value="NC_003198.1"/>
</dbReference>
<dbReference type="RefSeq" id="WP_000954855.1">
    <property type="nucleotide sequence ID" value="NZ_WSUR01000002.1"/>
</dbReference>
<dbReference type="SMR" id="Q8Z5J6"/>
<dbReference type="STRING" id="220341.gene:17586195"/>
<dbReference type="KEGG" id="stt:t0795"/>
<dbReference type="KEGG" id="sty:STY2287"/>
<dbReference type="PATRIC" id="fig|220341.7.peg.2307"/>
<dbReference type="eggNOG" id="COG0139">
    <property type="taxonomic scope" value="Bacteria"/>
</dbReference>
<dbReference type="eggNOG" id="COG0140">
    <property type="taxonomic scope" value="Bacteria"/>
</dbReference>
<dbReference type="HOGENOM" id="CLU_048577_3_1_6"/>
<dbReference type="OMA" id="ERSCFHQ"/>
<dbReference type="OrthoDB" id="9795769at2"/>
<dbReference type="UniPathway" id="UPA00031">
    <property type="reaction ID" value="UER00007"/>
</dbReference>
<dbReference type="UniPathway" id="UPA00031">
    <property type="reaction ID" value="UER00008"/>
</dbReference>
<dbReference type="Proteomes" id="UP000000541">
    <property type="component" value="Chromosome"/>
</dbReference>
<dbReference type="Proteomes" id="UP000002670">
    <property type="component" value="Chromosome"/>
</dbReference>
<dbReference type="GO" id="GO:0005737">
    <property type="term" value="C:cytoplasm"/>
    <property type="evidence" value="ECO:0007669"/>
    <property type="project" value="UniProtKB-SubCell"/>
</dbReference>
<dbReference type="GO" id="GO:0005524">
    <property type="term" value="F:ATP binding"/>
    <property type="evidence" value="ECO:0007669"/>
    <property type="project" value="UniProtKB-KW"/>
</dbReference>
<dbReference type="GO" id="GO:0004635">
    <property type="term" value="F:phosphoribosyl-AMP cyclohydrolase activity"/>
    <property type="evidence" value="ECO:0007669"/>
    <property type="project" value="UniProtKB-UniRule"/>
</dbReference>
<dbReference type="GO" id="GO:0004636">
    <property type="term" value="F:phosphoribosyl-ATP diphosphatase activity"/>
    <property type="evidence" value="ECO:0007669"/>
    <property type="project" value="UniProtKB-UniRule"/>
</dbReference>
<dbReference type="GO" id="GO:0000105">
    <property type="term" value="P:L-histidine biosynthetic process"/>
    <property type="evidence" value="ECO:0007669"/>
    <property type="project" value="UniProtKB-UniRule"/>
</dbReference>
<dbReference type="CDD" id="cd11534">
    <property type="entry name" value="NTP-PPase_HisIE_like"/>
    <property type="match status" value="1"/>
</dbReference>
<dbReference type="FunFam" id="1.10.287.1080:FF:000002">
    <property type="entry name" value="Histidine biosynthesis bifunctional protein HisIE"/>
    <property type="match status" value="1"/>
</dbReference>
<dbReference type="FunFam" id="3.10.20.810:FF:000001">
    <property type="entry name" value="Histidine biosynthesis bifunctional protein HisIE"/>
    <property type="match status" value="1"/>
</dbReference>
<dbReference type="Gene3D" id="1.10.287.1080">
    <property type="entry name" value="MazG-like"/>
    <property type="match status" value="1"/>
</dbReference>
<dbReference type="Gene3D" id="3.10.20.810">
    <property type="entry name" value="Phosphoribosyl-AMP cyclohydrolase"/>
    <property type="match status" value="1"/>
</dbReference>
<dbReference type="HAMAP" id="MF_01020">
    <property type="entry name" value="HisE"/>
    <property type="match status" value="1"/>
</dbReference>
<dbReference type="HAMAP" id="MF_01019">
    <property type="entry name" value="HisIE"/>
    <property type="match status" value="1"/>
</dbReference>
<dbReference type="InterPro" id="IPR023019">
    <property type="entry name" value="His_synth_HisIE"/>
</dbReference>
<dbReference type="InterPro" id="IPR008179">
    <property type="entry name" value="HisE"/>
</dbReference>
<dbReference type="InterPro" id="IPR021130">
    <property type="entry name" value="PRib-ATP_PPHydrolase-like"/>
</dbReference>
<dbReference type="InterPro" id="IPR002496">
    <property type="entry name" value="PRib_AMP_CycHydrolase_dom"/>
</dbReference>
<dbReference type="InterPro" id="IPR038019">
    <property type="entry name" value="PRib_AMP_CycHydrolase_sf"/>
</dbReference>
<dbReference type="NCBIfam" id="TIGR03188">
    <property type="entry name" value="histidine_hisI"/>
    <property type="match status" value="1"/>
</dbReference>
<dbReference type="NCBIfam" id="NF000768">
    <property type="entry name" value="PRK00051.1"/>
    <property type="match status" value="1"/>
</dbReference>
<dbReference type="NCBIfam" id="NF002747">
    <property type="entry name" value="PRK02759.1"/>
    <property type="match status" value="1"/>
</dbReference>
<dbReference type="PANTHER" id="PTHR42945">
    <property type="entry name" value="HISTIDINE BIOSYNTHESIS BIFUNCTIONAL PROTEIN"/>
    <property type="match status" value="1"/>
</dbReference>
<dbReference type="PANTHER" id="PTHR42945:SF9">
    <property type="entry name" value="HISTIDINE BIOSYNTHESIS BIFUNCTIONAL PROTEIN HISIE"/>
    <property type="match status" value="1"/>
</dbReference>
<dbReference type="Pfam" id="PF01502">
    <property type="entry name" value="PRA-CH"/>
    <property type="match status" value="1"/>
</dbReference>
<dbReference type="Pfam" id="PF01503">
    <property type="entry name" value="PRA-PH"/>
    <property type="match status" value="1"/>
</dbReference>
<dbReference type="SUPFAM" id="SSF101386">
    <property type="entry name" value="all-alpha NTP pyrophosphatases"/>
    <property type="match status" value="1"/>
</dbReference>
<dbReference type="SUPFAM" id="SSF141734">
    <property type="entry name" value="HisI-like"/>
    <property type="match status" value="1"/>
</dbReference>
<keyword id="KW-0028">Amino-acid biosynthesis</keyword>
<keyword id="KW-0067">ATP-binding</keyword>
<keyword id="KW-0963">Cytoplasm</keyword>
<keyword id="KW-0368">Histidine biosynthesis</keyword>
<keyword id="KW-0378">Hydrolase</keyword>
<keyword id="KW-0511">Multifunctional enzyme</keyword>
<keyword id="KW-0547">Nucleotide-binding</keyword>
<organism>
    <name type="scientific">Salmonella typhi</name>
    <dbReference type="NCBI Taxonomy" id="90370"/>
    <lineage>
        <taxon>Bacteria</taxon>
        <taxon>Pseudomonadati</taxon>
        <taxon>Pseudomonadota</taxon>
        <taxon>Gammaproteobacteria</taxon>
        <taxon>Enterobacterales</taxon>
        <taxon>Enterobacteriaceae</taxon>
        <taxon>Salmonella</taxon>
    </lineage>
</organism>
<evidence type="ECO:0000250" key="1"/>
<evidence type="ECO:0000305" key="2"/>
<gene>
    <name type="primary">hisI</name>
    <name type="synonym">hisIE</name>
    <name type="ordered locus">STY2287</name>
    <name type="ordered locus">t0795</name>
</gene>
<sequence>MLTEQQRRELDWEKTDGLMPAIVQHAVSGEVLTLGYMNPQALDKTIESGHVTFFSRTKQRLWTKGETSGHVLNVVSIAPDCDNDTLLVLANPVGPTCHKGTSSCFGDASHQWLFLYQLEQLLAERKTADPASSYTAKLYASGTKRIAQKVGEEGVETALAATVNDRFELTNEASDLMYHLLVLLQDQDLNLTTVIDDLRKRHQ</sequence>
<protein>
    <recommendedName>
        <fullName>Histidine biosynthesis bifunctional protein HisIE</fullName>
    </recommendedName>
    <domain>
        <recommendedName>
            <fullName>Phosphoribosyl-AMP cyclohydrolase</fullName>
            <shortName>PRA-CH</shortName>
            <ecNumber>3.5.4.19</ecNumber>
        </recommendedName>
    </domain>
    <domain>
        <recommendedName>
            <fullName>Phosphoribosyl-ATP pyrophosphatase</fullName>
            <shortName>PRA-PH</shortName>
            <ecNumber>3.6.1.31</ecNumber>
        </recommendedName>
    </domain>
</protein>
<proteinExistence type="inferred from homology"/>